<organism>
    <name type="scientific">Cyanidium caldarium</name>
    <name type="common">Red alga</name>
    <dbReference type="NCBI Taxonomy" id="2771"/>
    <lineage>
        <taxon>Eukaryota</taxon>
        <taxon>Rhodophyta</taxon>
        <taxon>Bangiophyceae</taxon>
        <taxon>Cyanidiales</taxon>
        <taxon>Cyanidiaceae</taxon>
        <taxon>Cyanidium</taxon>
    </lineage>
</organism>
<gene>
    <name type="primary">apcE</name>
</gene>
<reference key="1">
    <citation type="journal article" date="2000" name="J. Mol. Evol.">
        <title>The structure and gene repertoire of an ancient red algal plastid genome.</title>
        <authorList>
            <person name="Gloeckner G."/>
            <person name="Rosenthal A."/>
            <person name="Valentin K.-U."/>
        </authorList>
    </citation>
    <scope>NUCLEOTIDE SEQUENCE [LARGE SCALE GENOMIC DNA]</scope>
    <source>
        <strain>RK-1</strain>
    </source>
</reference>
<keyword id="KW-0042">Antenna complex</keyword>
<keyword id="KW-0089">Bile pigment</keyword>
<keyword id="KW-0150">Chloroplast</keyword>
<keyword id="KW-0157">Chromophore</keyword>
<keyword id="KW-0249">Electron transport</keyword>
<keyword id="KW-0456">Lyase</keyword>
<keyword id="KW-0472">Membrane</keyword>
<keyword id="KW-0602">Photosynthesis</keyword>
<keyword id="KW-0605">Phycobilisome</keyword>
<keyword id="KW-0934">Plastid</keyword>
<keyword id="KW-0677">Repeat</keyword>
<keyword id="KW-0793">Thylakoid</keyword>
<keyword id="KW-0813">Transport</keyword>
<dbReference type="EC" id="4.-.-.-"/>
<dbReference type="EMBL" id="AF022186">
    <property type="protein sequence ID" value="AAF12901.1"/>
    <property type="molecule type" value="Genomic_DNA"/>
</dbReference>
<dbReference type="RefSeq" id="NP_045193.1">
    <property type="nucleotide sequence ID" value="NC_001840.1"/>
</dbReference>
<dbReference type="SMR" id="Q9TLS6"/>
<dbReference type="GeneID" id="800215"/>
<dbReference type="GO" id="GO:0009535">
    <property type="term" value="C:chloroplast thylakoid membrane"/>
    <property type="evidence" value="ECO:0007669"/>
    <property type="project" value="UniProtKB-SubCell"/>
</dbReference>
<dbReference type="GO" id="GO:0030089">
    <property type="term" value="C:phycobilisome"/>
    <property type="evidence" value="ECO:0007669"/>
    <property type="project" value="UniProtKB-KW"/>
</dbReference>
<dbReference type="GO" id="GO:0016829">
    <property type="term" value="F:lyase activity"/>
    <property type="evidence" value="ECO:0007669"/>
    <property type="project" value="UniProtKB-KW"/>
</dbReference>
<dbReference type="GO" id="GO:0015979">
    <property type="term" value="P:photosynthesis"/>
    <property type="evidence" value="ECO:0007669"/>
    <property type="project" value="UniProtKB-KW"/>
</dbReference>
<dbReference type="CDD" id="cd12128">
    <property type="entry name" value="PBP_PBS-LCM"/>
    <property type="match status" value="1"/>
</dbReference>
<dbReference type="Gene3D" id="1.10.3130.20">
    <property type="entry name" value="Phycobilisome linker domain"/>
    <property type="match status" value="3"/>
</dbReference>
<dbReference type="Gene3D" id="1.10.490.20">
    <property type="entry name" value="Phycocyanins"/>
    <property type="match status" value="1"/>
</dbReference>
<dbReference type="InterPro" id="IPR009050">
    <property type="entry name" value="Globin-like_sf"/>
</dbReference>
<dbReference type="InterPro" id="IPR001297">
    <property type="entry name" value="PBS_linker_dom"/>
</dbReference>
<dbReference type="InterPro" id="IPR038255">
    <property type="entry name" value="PBS_linker_sf"/>
</dbReference>
<dbReference type="InterPro" id="IPR012128">
    <property type="entry name" value="Phycobilisome_asu/bsu"/>
</dbReference>
<dbReference type="InterPro" id="IPR038719">
    <property type="entry name" value="Phycobilisome_asu/bsu_sf"/>
</dbReference>
<dbReference type="PANTHER" id="PTHR34011">
    <property type="entry name" value="PHYCOBILISOME 32.1 KDA LINKER POLYPEPTIDE, PHYCOCYANIN-ASSOCIATED, ROD 2-RELATED"/>
    <property type="match status" value="1"/>
</dbReference>
<dbReference type="Pfam" id="PF00427">
    <property type="entry name" value="PBS_linker_poly"/>
    <property type="match status" value="3"/>
</dbReference>
<dbReference type="Pfam" id="PF00502">
    <property type="entry name" value="Phycobilisome"/>
    <property type="match status" value="2"/>
</dbReference>
<dbReference type="SUPFAM" id="SSF46458">
    <property type="entry name" value="Globin-like"/>
    <property type="match status" value="1"/>
</dbReference>
<dbReference type="PROSITE" id="PS51445">
    <property type="entry name" value="PBS_LINKER"/>
    <property type="match status" value="3"/>
</dbReference>
<protein>
    <recommendedName>
        <fullName>Phycobiliprotein ApcE</fullName>
        <ecNumber>4.-.-.-</ecNumber>
    </recommendedName>
    <alternativeName>
        <fullName>Anchor polypeptide</fullName>
    </alternativeName>
    <alternativeName>
        <fullName>PBS-anchor protein</fullName>
    </alternativeName>
    <alternativeName>
        <fullName>Phycobilisome linker polypeptide</fullName>
    </alternativeName>
</protein>
<comment type="function">
    <text evidence="1">This protein is postulated to act both as terminal energy acceptor and as a linker polypeptide that stabilizes the phycobilisome architecture. May have intrinsic bilin lyase activity (By similarity).</text>
</comment>
<comment type="subcellular location">
    <subcellularLocation>
        <location evidence="1">Plastid</location>
        <location evidence="1">Chloroplast thylakoid membrane</location>
        <topology evidence="1">Peripheral membrane protein</topology>
        <orientation evidence="1">Stromal side</orientation>
    </subcellularLocation>
</comment>
<comment type="PTM">
    <text evidence="4">Contains one covalently linked bilin chromophore. This protein autochromophorylates (Potential).</text>
</comment>
<comment type="similarity">
    <text evidence="3">Belongs to the phycobilisome linker protein family.</text>
</comment>
<accession>Q9TLS6</accession>
<sequence length="870" mass="99077">MGLRTSSGSPLVKPKLYKTSASNVISLAEKQDRFLNLGELTDLNTYFSSGNRRLDIAKVISLNANLIISRAADRIFVGGSPLSFLERPQAAVTLTSDQASSTSIQSTKGLGNGNIFQNFFKSTSEAPTGFKPINVVRYGSSNMKKSIRDLDWFLRYVTYAIVAGDTSILIVNTKGLRELIDKACSSSAAIVALKEMKNVSLSLFNYDIESQNIVRLYFNTLVSEFESPASSSKVRKRNSLDLQGLAIPDIYLVAADKSLRYVMKPNLSNTEKAQVIKACYRQVFERDIAKAYGLSLLELESKLKNLQISVKEFIRALGKSTLYRKNFYEGFTNSRVVELAFRHFMGRGLSSLQEFRKYFAILSSNGLDALIDSIINNSEYAEYFGEETVPYIRGYGQEAQECRNWGSQFALFKYSAPFRTIPQFITLFADYTQLPPSQHCYGKLNDPLNIQFGAIFKNSYVNEQSRPVLFPRGSRRILVYKGAGIFNQLGSPNALEKPPSNVSIAKWSKETDLNFILNAAYLRVFGRYVYEEEKIALRPLENEFKRRSISVRDFVGQLAKSDVFRSLYWSRLYICKSIEYIHIRLLGRPTYGRTEINNYFDIVYKSGFYAFVDSLVNSREYIKCFGNDTVPYDRYSTPEAVSSSIFRLSFINSVSYKSLKPKIEKFIQLGVARDAKSLSSLNSKVFQGVSQARSQKRVFKVSDYSNVMNLRIVFYAALRQVFERNIEPYIKGGEFKDIESLFLSGKISVRELIKEIGSSSLYRKEFYIPFPNTQVIEFCTKHFLGRAPKNQSEIRYYNQVLAVQGLREMINYMINSKEYLSVFGDDIVPYRRFPTLPAANFPNTQRLYSRQTKQNRNIVVPSFSGLLNTV</sequence>
<feature type="chain" id="PRO_0000199260" description="Phycobiliprotein ApcE">
    <location>
        <begin position="1"/>
        <end position="870"/>
    </location>
</feature>
<feature type="domain" description="PBS-linker 1" evidence="3">
    <location>
        <begin position="241"/>
        <end position="421"/>
    </location>
</feature>
<feature type="domain" description="PBS-linker 2" evidence="3">
    <location>
        <begin position="482"/>
        <end position="665"/>
    </location>
</feature>
<feature type="domain" description="PBS-linker 3" evidence="3">
    <location>
        <begin position="679"/>
        <end position="856"/>
    </location>
</feature>
<feature type="binding site" description="covalent" evidence="2">
    <location>
        <position position="184"/>
    </location>
    <ligand>
        <name>(2R,3E)-phycocyanobilin</name>
        <dbReference type="ChEBI" id="CHEBI:85275"/>
    </ligand>
</feature>
<geneLocation type="chloroplast"/>
<proteinExistence type="inferred from homology"/>
<evidence type="ECO:0000250" key="1"/>
<evidence type="ECO:0000255" key="2"/>
<evidence type="ECO:0000255" key="3">
    <source>
        <dbReference type="PROSITE-ProRule" id="PRU00775"/>
    </source>
</evidence>
<evidence type="ECO:0000305" key="4"/>
<name>APCE_CYACA</name>